<comment type="function">
    <text evidence="1">NDH shuttles electrons from NAD(P)H:plastoquinone, via FMN and iron-sulfur (Fe-S) centers, to quinones in the photosynthetic chain and possibly in a chloroplast respiratory chain. The immediate electron acceptor for the enzyme in this species is believed to be plastoquinone. Couples the redox reaction to proton translocation, and thus conserves the redox energy in a proton gradient.</text>
</comment>
<comment type="catalytic activity">
    <reaction evidence="1">
        <text>a plastoquinone + NADH + (n+1) H(+)(in) = a plastoquinol + NAD(+) + n H(+)(out)</text>
        <dbReference type="Rhea" id="RHEA:42608"/>
        <dbReference type="Rhea" id="RHEA-COMP:9561"/>
        <dbReference type="Rhea" id="RHEA-COMP:9562"/>
        <dbReference type="ChEBI" id="CHEBI:15378"/>
        <dbReference type="ChEBI" id="CHEBI:17757"/>
        <dbReference type="ChEBI" id="CHEBI:57540"/>
        <dbReference type="ChEBI" id="CHEBI:57945"/>
        <dbReference type="ChEBI" id="CHEBI:62192"/>
    </reaction>
</comment>
<comment type="catalytic activity">
    <reaction evidence="1">
        <text>a plastoquinone + NADPH + (n+1) H(+)(in) = a plastoquinol + NADP(+) + n H(+)(out)</text>
        <dbReference type="Rhea" id="RHEA:42612"/>
        <dbReference type="Rhea" id="RHEA-COMP:9561"/>
        <dbReference type="Rhea" id="RHEA-COMP:9562"/>
        <dbReference type="ChEBI" id="CHEBI:15378"/>
        <dbReference type="ChEBI" id="CHEBI:17757"/>
        <dbReference type="ChEBI" id="CHEBI:57783"/>
        <dbReference type="ChEBI" id="CHEBI:58349"/>
        <dbReference type="ChEBI" id="CHEBI:62192"/>
    </reaction>
</comment>
<comment type="subunit">
    <text evidence="1">NDH is composed of at least 16 different subunits, 5 of which are encoded in the nucleus.</text>
</comment>
<comment type="subcellular location">
    <subcellularLocation>
        <location evidence="1">Plastid</location>
        <location evidence="1">Chloroplast thylakoid membrane</location>
        <topology evidence="1">Peripheral membrane protein</topology>
        <orientation evidence="1">Stromal side</orientation>
    </subcellularLocation>
</comment>
<comment type="similarity">
    <text evidence="1">Belongs to the complex I 49 kDa subunit family.</text>
</comment>
<name>NDHH_LOLPR</name>
<organism>
    <name type="scientific">Lolium perenne</name>
    <name type="common">Perennial ryegrass</name>
    <dbReference type="NCBI Taxonomy" id="4522"/>
    <lineage>
        <taxon>Eukaryota</taxon>
        <taxon>Viridiplantae</taxon>
        <taxon>Streptophyta</taxon>
        <taxon>Embryophyta</taxon>
        <taxon>Tracheophyta</taxon>
        <taxon>Spermatophyta</taxon>
        <taxon>Magnoliopsida</taxon>
        <taxon>Liliopsida</taxon>
        <taxon>Poales</taxon>
        <taxon>Poaceae</taxon>
        <taxon>BOP clade</taxon>
        <taxon>Pooideae</taxon>
        <taxon>Poodae</taxon>
        <taxon>Poeae</taxon>
        <taxon>Poeae Chloroplast Group 2 (Poeae type)</taxon>
        <taxon>Loliodinae</taxon>
        <taxon>Loliinae</taxon>
        <taxon>Lolium</taxon>
    </lineage>
</organism>
<feature type="chain" id="PRO_0000358003" description="NAD(P)H-quinone oxidoreductase subunit H, chloroplastic">
    <location>
        <begin position="1"/>
        <end position="393"/>
    </location>
</feature>
<protein>
    <recommendedName>
        <fullName evidence="1">NAD(P)H-quinone oxidoreductase subunit H, chloroplastic</fullName>
        <ecNumber evidence="1">7.1.1.-</ecNumber>
    </recommendedName>
    <alternativeName>
        <fullName>NAD(P)H dehydrogenase subunit H</fullName>
    </alternativeName>
    <alternativeName>
        <fullName evidence="1">NADH-plastoquinone oxidoreductase 49 kDa subunit</fullName>
    </alternativeName>
    <alternativeName>
        <fullName evidence="1">NADH-plastoquinone oxidoreductase subunit H</fullName>
    </alternativeName>
</protein>
<proteinExistence type="inferred from homology"/>
<evidence type="ECO:0000255" key="1">
    <source>
        <dbReference type="HAMAP-Rule" id="MF_01358"/>
    </source>
</evidence>
<sequence length="393" mass="45757">MSLPLTRKDLMIVNMGPQHPSMHGVLRLIVTLDGEDVIDCEPILGYLHRGMEKIAENRTIIQYLPYVTRWDYLATMFTEAITVNAPEFLENIQIPQRASYIRVIMLELSRIASHLLWLGPFMADLGAQTPFFYIFRERELIYDLFEAATGMRMMHNYFRIGGVAADLPYGWIDKCLDFCDYFLRGIIEYQQLIKQNPIFLERVEGVGFISGEEAVNWGLSGPMLRASGIQWDLRKVDLYESYNQFDWKVQWQKEGDSLARYLVRISEMRESIKIIQQAIEKIPGGPYENLEVRRFKKAKTSEWNDFEYKFLGKKPSPNFELSKQELYVRVEAPKGELGIYLVGDDSLFPWRWKIRPPGFINLQILPQLVKKMKLADIMTILGSIDIIMGEVDR</sequence>
<reference key="1">
    <citation type="journal article" date="2008" name="PLoS ONE">
        <title>An optimized chloroplast DNA extraction protocol for grasses (Poaceae) proves suitable for whole plastid genome sequencing and SNP detection.</title>
        <authorList>
            <person name="Diekmann K."/>
            <person name="Hodkinson T.R."/>
            <person name="Fricke E."/>
            <person name="Barth S."/>
        </authorList>
    </citation>
    <scope>NUCLEOTIDE SEQUENCE [LARGE SCALE GENOMIC DNA]</scope>
    <source>
        <strain>cv. Cashel</strain>
    </source>
</reference>
<accession>A8Y9E3</accession>
<dbReference type="EC" id="7.1.1.-" evidence="1"/>
<dbReference type="EMBL" id="AM777385">
    <property type="protein sequence ID" value="CAO86032.1"/>
    <property type="molecule type" value="Genomic_DNA"/>
</dbReference>
<dbReference type="RefSeq" id="YP_001531338.1">
    <property type="nucleotide sequence ID" value="NC_009950.1"/>
</dbReference>
<dbReference type="SMR" id="A8Y9E3"/>
<dbReference type="GeneID" id="5696582"/>
<dbReference type="KEGG" id="lper:5696582"/>
<dbReference type="GO" id="GO:0009535">
    <property type="term" value="C:chloroplast thylakoid membrane"/>
    <property type="evidence" value="ECO:0007669"/>
    <property type="project" value="UniProtKB-SubCell"/>
</dbReference>
<dbReference type="GO" id="GO:0051287">
    <property type="term" value="F:NAD binding"/>
    <property type="evidence" value="ECO:0007669"/>
    <property type="project" value="InterPro"/>
</dbReference>
<dbReference type="GO" id="GO:0016655">
    <property type="term" value="F:oxidoreductase activity, acting on NAD(P)H, quinone or similar compound as acceptor"/>
    <property type="evidence" value="ECO:0007669"/>
    <property type="project" value="UniProtKB-UniRule"/>
</dbReference>
<dbReference type="GO" id="GO:0048038">
    <property type="term" value="F:quinone binding"/>
    <property type="evidence" value="ECO:0007669"/>
    <property type="project" value="UniProtKB-KW"/>
</dbReference>
<dbReference type="GO" id="GO:0019684">
    <property type="term" value="P:photosynthesis, light reaction"/>
    <property type="evidence" value="ECO:0007669"/>
    <property type="project" value="UniProtKB-UniRule"/>
</dbReference>
<dbReference type="Gene3D" id="1.10.645.10">
    <property type="entry name" value="Cytochrome-c3 Hydrogenase, chain B"/>
    <property type="match status" value="1"/>
</dbReference>
<dbReference type="HAMAP" id="MF_01358">
    <property type="entry name" value="NDH1_NuoD"/>
    <property type="match status" value="1"/>
</dbReference>
<dbReference type="InterPro" id="IPR001135">
    <property type="entry name" value="NADH_Q_OxRdtase_suD"/>
</dbReference>
<dbReference type="InterPro" id="IPR014029">
    <property type="entry name" value="NADH_UbQ_OxRdtase_49kDa_CS"/>
</dbReference>
<dbReference type="InterPro" id="IPR022885">
    <property type="entry name" value="NDH1_su_D/H"/>
</dbReference>
<dbReference type="InterPro" id="IPR029014">
    <property type="entry name" value="NiFe-Hase_large"/>
</dbReference>
<dbReference type="NCBIfam" id="NF004739">
    <property type="entry name" value="PRK06075.1"/>
    <property type="match status" value="1"/>
</dbReference>
<dbReference type="NCBIfam" id="NF005649">
    <property type="entry name" value="PRK07415.1"/>
    <property type="match status" value="1"/>
</dbReference>
<dbReference type="PANTHER" id="PTHR11993:SF10">
    <property type="entry name" value="NADH DEHYDROGENASE [UBIQUINONE] IRON-SULFUR PROTEIN 2, MITOCHONDRIAL"/>
    <property type="match status" value="1"/>
</dbReference>
<dbReference type="PANTHER" id="PTHR11993">
    <property type="entry name" value="NADH-UBIQUINONE OXIDOREDUCTASE 49 KDA SUBUNIT"/>
    <property type="match status" value="1"/>
</dbReference>
<dbReference type="Pfam" id="PF00346">
    <property type="entry name" value="Complex1_49kDa"/>
    <property type="match status" value="1"/>
</dbReference>
<dbReference type="SUPFAM" id="SSF56762">
    <property type="entry name" value="HydB/Nqo4-like"/>
    <property type="match status" value="1"/>
</dbReference>
<dbReference type="PROSITE" id="PS00535">
    <property type="entry name" value="COMPLEX1_49K"/>
    <property type="match status" value="1"/>
</dbReference>
<geneLocation type="chloroplast"/>
<keyword id="KW-0150">Chloroplast</keyword>
<keyword id="KW-0472">Membrane</keyword>
<keyword id="KW-0520">NAD</keyword>
<keyword id="KW-0521">NADP</keyword>
<keyword id="KW-0934">Plastid</keyword>
<keyword id="KW-0618">Plastoquinone</keyword>
<keyword id="KW-0874">Quinone</keyword>
<keyword id="KW-0793">Thylakoid</keyword>
<keyword id="KW-1278">Translocase</keyword>
<keyword id="KW-0813">Transport</keyword>
<gene>
    <name evidence="1" type="primary">ndhH</name>
    <name type="ordered locus">LopeCp112</name>
</gene>